<accession>A7ZNP9</accession>
<feature type="chain" id="PRO_1000068506" description="Multidrug resistance protein MdtC">
    <location>
        <begin position="1"/>
        <end position="1025"/>
    </location>
</feature>
<feature type="transmembrane region" description="Helical" evidence="1">
    <location>
        <begin position="3"/>
        <end position="23"/>
    </location>
</feature>
<feature type="transmembrane region" description="Helical" evidence="1">
    <location>
        <begin position="333"/>
        <end position="353"/>
    </location>
</feature>
<feature type="transmembrane region" description="Helical" evidence="1">
    <location>
        <begin position="360"/>
        <end position="380"/>
    </location>
</feature>
<feature type="transmembrane region" description="Helical" evidence="1">
    <location>
        <begin position="387"/>
        <end position="407"/>
    </location>
</feature>
<feature type="transmembrane region" description="Helical" evidence="1">
    <location>
        <begin position="431"/>
        <end position="451"/>
    </location>
</feature>
<feature type="transmembrane region" description="Helical" evidence="1">
    <location>
        <begin position="463"/>
        <end position="483"/>
    </location>
</feature>
<feature type="transmembrane region" description="Helical" evidence="1">
    <location>
        <begin position="528"/>
        <end position="548"/>
    </location>
</feature>
<feature type="transmembrane region" description="Helical" evidence="1">
    <location>
        <begin position="853"/>
        <end position="873"/>
    </location>
</feature>
<feature type="transmembrane region" description="Helical" evidence="1">
    <location>
        <begin position="875"/>
        <end position="895"/>
    </location>
</feature>
<feature type="transmembrane region" description="Helical" evidence="1">
    <location>
        <begin position="897"/>
        <end position="917"/>
    </location>
</feature>
<feature type="transmembrane region" description="Helical" evidence="1">
    <location>
        <begin position="953"/>
        <end position="973"/>
    </location>
</feature>
<feature type="transmembrane region" description="Helical" evidence="1">
    <location>
        <begin position="984"/>
        <end position="1004"/>
    </location>
</feature>
<organism>
    <name type="scientific">Escherichia coli O139:H28 (strain E24377A / ETEC)</name>
    <dbReference type="NCBI Taxonomy" id="331111"/>
    <lineage>
        <taxon>Bacteria</taxon>
        <taxon>Pseudomonadati</taxon>
        <taxon>Pseudomonadota</taxon>
        <taxon>Gammaproteobacteria</taxon>
        <taxon>Enterobacterales</taxon>
        <taxon>Enterobacteriaceae</taxon>
        <taxon>Escherichia</taxon>
    </lineage>
</organism>
<protein>
    <recommendedName>
        <fullName evidence="1">Multidrug resistance protein MdtC</fullName>
    </recommendedName>
    <alternativeName>
        <fullName evidence="1">Multidrug transporter MdtC</fullName>
    </alternativeName>
</protein>
<comment type="function">
    <text evidence="1">The MdtABC tripartite complex confers resistance against novobiocin and deoxycholate.</text>
</comment>
<comment type="subunit">
    <text evidence="1">Part of a tripartite efflux system composed of MdtA, MdtB and MdtC. MdtC forms a heteromultimer with MdtB.</text>
</comment>
<comment type="subcellular location">
    <subcellularLocation>
        <location evidence="1">Cell inner membrane</location>
        <topology evidence="1">Multi-pass membrane protein</topology>
    </subcellularLocation>
</comment>
<comment type="induction">
    <text>The mdtABC operon is transcriptionally activated by BaeR.</text>
</comment>
<comment type="similarity">
    <text evidence="1">Belongs to the resistance-nodulation-cell division (RND) (TC 2.A.6) family. MdtC subfamily.</text>
</comment>
<proteinExistence type="evidence at transcript level"/>
<evidence type="ECO:0000255" key="1">
    <source>
        <dbReference type="HAMAP-Rule" id="MF_01424"/>
    </source>
</evidence>
<gene>
    <name evidence="1" type="primary">mdtC</name>
    <name type="ordered locus">EcE24377A_2368</name>
</gene>
<dbReference type="EMBL" id="CP000800">
    <property type="protein sequence ID" value="ABV19625.1"/>
    <property type="molecule type" value="Genomic_DNA"/>
</dbReference>
<dbReference type="RefSeq" id="WP_000667541.1">
    <property type="nucleotide sequence ID" value="NC_009801.1"/>
</dbReference>
<dbReference type="SMR" id="A7ZNP9"/>
<dbReference type="GeneID" id="75205984"/>
<dbReference type="KEGG" id="ecw:EcE24377A_2368"/>
<dbReference type="HOGENOM" id="CLU_002755_1_2_6"/>
<dbReference type="Proteomes" id="UP000001122">
    <property type="component" value="Chromosome"/>
</dbReference>
<dbReference type="GO" id="GO:0005886">
    <property type="term" value="C:plasma membrane"/>
    <property type="evidence" value="ECO:0007669"/>
    <property type="project" value="UniProtKB-SubCell"/>
</dbReference>
<dbReference type="GO" id="GO:0042910">
    <property type="term" value="F:xenobiotic transmembrane transporter activity"/>
    <property type="evidence" value="ECO:0007669"/>
    <property type="project" value="TreeGrafter"/>
</dbReference>
<dbReference type="FunFam" id="1.20.1640.10:FF:000001">
    <property type="entry name" value="Efflux pump membrane transporter"/>
    <property type="match status" value="1"/>
</dbReference>
<dbReference type="FunFam" id="3.30.70.1430:FF:000001">
    <property type="entry name" value="Efflux pump membrane transporter"/>
    <property type="match status" value="1"/>
</dbReference>
<dbReference type="FunFam" id="3.30.2090.10:FF:000004">
    <property type="entry name" value="Multidrug resistance protein MdtC"/>
    <property type="match status" value="1"/>
</dbReference>
<dbReference type="FunFam" id="3.30.2090.10:FF:000005">
    <property type="entry name" value="Multidrug resistance protein MdtC"/>
    <property type="match status" value="1"/>
</dbReference>
<dbReference type="FunFam" id="3.30.70.1430:FF:000004">
    <property type="entry name" value="Multidrug resistance protein MdtC"/>
    <property type="match status" value="1"/>
</dbReference>
<dbReference type="Gene3D" id="3.30.70.1430">
    <property type="entry name" value="Multidrug efflux transporter AcrB pore domain"/>
    <property type="match status" value="2"/>
</dbReference>
<dbReference type="Gene3D" id="3.30.70.1440">
    <property type="entry name" value="Multidrug efflux transporter AcrB pore domain"/>
    <property type="match status" value="1"/>
</dbReference>
<dbReference type="Gene3D" id="3.30.70.1320">
    <property type="entry name" value="Multidrug efflux transporter AcrB pore domain like"/>
    <property type="match status" value="1"/>
</dbReference>
<dbReference type="Gene3D" id="3.30.2090.10">
    <property type="entry name" value="Multidrug efflux transporter AcrB TolC docking domain, DN and DC subdomains"/>
    <property type="match status" value="2"/>
</dbReference>
<dbReference type="Gene3D" id="1.20.1640.10">
    <property type="entry name" value="Multidrug efflux transporter AcrB transmembrane domain"/>
    <property type="match status" value="2"/>
</dbReference>
<dbReference type="HAMAP" id="MF_01424">
    <property type="entry name" value="MdtC"/>
    <property type="match status" value="1"/>
</dbReference>
<dbReference type="InterPro" id="IPR027463">
    <property type="entry name" value="AcrB_DN_DC_subdom"/>
</dbReference>
<dbReference type="InterPro" id="IPR001036">
    <property type="entry name" value="Acrflvin-R"/>
</dbReference>
<dbReference type="InterPro" id="IPR023931">
    <property type="entry name" value="Multidrug-R_MdtC"/>
</dbReference>
<dbReference type="NCBIfam" id="NF007905">
    <property type="entry name" value="PRK10614.1"/>
    <property type="match status" value="1"/>
</dbReference>
<dbReference type="NCBIfam" id="NF033617">
    <property type="entry name" value="RND_permease_2"/>
    <property type="match status" value="1"/>
</dbReference>
<dbReference type="PANTHER" id="PTHR32063">
    <property type="match status" value="1"/>
</dbReference>
<dbReference type="PANTHER" id="PTHR32063:SF34">
    <property type="entry name" value="MULTIDRUG RESISTANCE PROTEIN MDTC"/>
    <property type="match status" value="1"/>
</dbReference>
<dbReference type="Pfam" id="PF00873">
    <property type="entry name" value="ACR_tran"/>
    <property type="match status" value="1"/>
</dbReference>
<dbReference type="PRINTS" id="PR00702">
    <property type="entry name" value="ACRIFLAVINRP"/>
</dbReference>
<dbReference type="SUPFAM" id="SSF82693">
    <property type="entry name" value="Multidrug efflux transporter AcrB pore domain, PN1, PN2, PC1 and PC2 subdomains"/>
    <property type="match status" value="4"/>
</dbReference>
<dbReference type="SUPFAM" id="SSF82714">
    <property type="entry name" value="Multidrug efflux transporter AcrB TolC docking domain, DN and DC subdomains"/>
    <property type="match status" value="2"/>
</dbReference>
<dbReference type="SUPFAM" id="SSF82866">
    <property type="entry name" value="Multidrug efflux transporter AcrB transmembrane domain"/>
    <property type="match status" value="2"/>
</dbReference>
<name>MDTC_ECO24</name>
<reference key="1">
    <citation type="journal article" date="2008" name="J. Bacteriol.">
        <title>The pangenome structure of Escherichia coli: comparative genomic analysis of E. coli commensal and pathogenic isolates.</title>
        <authorList>
            <person name="Rasko D.A."/>
            <person name="Rosovitz M.J."/>
            <person name="Myers G.S.A."/>
            <person name="Mongodin E.F."/>
            <person name="Fricke W.F."/>
            <person name="Gajer P."/>
            <person name="Crabtree J."/>
            <person name="Sebaihia M."/>
            <person name="Thomson N.R."/>
            <person name="Chaudhuri R."/>
            <person name="Henderson I.R."/>
            <person name="Sperandio V."/>
            <person name="Ravel J."/>
        </authorList>
    </citation>
    <scope>NUCLEOTIDE SEQUENCE [LARGE SCALE GENOMIC DNA]</scope>
    <source>
        <strain>E24377A / ETEC</strain>
    </source>
</reference>
<sequence>MKFFALFIYRPVATILLSVAITLCGILGFRMLPVAPLPQVDFPVIMVSASLPGASPETMASSVATPLERSLGRIAGVSEMTSSSSLGSTRIILQFDFDRDINGAARDVQAAINAAQSLLPSGMPSRPTYRKANPSDAPIMILTLTSDTYSQGELYDFASTQLAPTISQIDGVGDVDVGGSSLPAVRVGLNPQALFNQGVSLDDVRTAISNANVRKPQGALEDGTHRWQIQTNDELKTAAEYQPLIIHYNNGGAVRLGDVATVTDSVQDVRNAGMTNAKPAILLMIRKLPEANIIQTVDSIRAKLPELQETIPAAIDLQIAQDRSPTIRASLEEVEQTLIISVALVILVVFLFLRSGRATIIPAVAVPVSLIGTFAAMYLCGFSLNNLSLMALTIATGFVVDDAIVVLENIARHLEAGMKPLQAALQGTREVGFTVLSMSLSLVAVFLPLLLMGGLPGRLLREFAVTLSVAIVISLLVSLTLTPMMCGWMLKASKPREQKRLRGFGRMLVALQQGYGKSLKWVLNHTRLVGVVLLGTIALNIWLYISIPKTFFPEQDTGVLMGGIQADQSISFQAMRGKLQDFMKIIRDDPAVDNVTGFTGGSRVNSGMMFITLKPRDERSETAQQIIDRLRVKLAKEPGANLFLMAVQDIRVGGRQSNASYQYTLLSDDLAALREWEPKIRKKLATLPELADVNSDQQDNGAEMNLVYDRDTMARLGIDVQAANSLLNNAFGQRQISTIYQPMNQYKVVMEVDPRYTQDISALEKMFVINNEGKAIPLSYFAKWQPANAPLSVNHQGLSAASTISFNLPTGKSLSDASAAIDRAMTQLGVPSTVRGSFAGTAQVFQETMNSQVILIIAAIATVYIVLGILYESYVHPLTILSTLPSAGVGALLALELFNAPFSLIALIGIMLLIGIVKKNAIMMVDFALEAQRHGNLTPQEAIFQACLLRFRPIMMTTLAALFGALPLVLSGGDGSELRQPLGITIVGGLVMSQLLTLYTTPVVYLFFDRLRLRFSRKPKQTVTE</sequence>
<keyword id="KW-0997">Cell inner membrane</keyword>
<keyword id="KW-1003">Cell membrane</keyword>
<keyword id="KW-0472">Membrane</keyword>
<keyword id="KW-1185">Reference proteome</keyword>
<keyword id="KW-0812">Transmembrane</keyword>
<keyword id="KW-1133">Transmembrane helix</keyword>
<keyword id="KW-0813">Transport</keyword>